<accession>Q2J1P2</accession>
<gene>
    <name evidence="1" type="primary">hmgA</name>
    <name type="ordered locus">RPB_0907</name>
</gene>
<comment type="function">
    <text evidence="1">Involved in the catabolism of homogentisate (2,5-dihydroxyphenylacetate or 2,5-OH-PhAc), a central intermediate in the degradation of phenylalanine and tyrosine. Catalyzes the oxidative ring cleavage of the aromatic ring of homogentisate to yield maleylacetoacetate.</text>
</comment>
<comment type="catalytic activity">
    <reaction evidence="1">
        <text>homogentisate + O2 = 4-maleylacetoacetate + H(+)</text>
        <dbReference type="Rhea" id="RHEA:15449"/>
        <dbReference type="ChEBI" id="CHEBI:15378"/>
        <dbReference type="ChEBI" id="CHEBI:15379"/>
        <dbReference type="ChEBI" id="CHEBI:16169"/>
        <dbReference type="ChEBI" id="CHEBI:17105"/>
        <dbReference type="EC" id="1.13.11.5"/>
    </reaction>
</comment>
<comment type="cofactor">
    <cofactor evidence="1">
        <name>Fe cation</name>
        <dbReference type="ChEBI" id="CHEBI:24875"/>
    </cofactor>
</comment>
<comment type="pathway">
    <text evidence="1">Amino-acid degradation; L-phenylalanine degradation; acetoacetate and fumarate from L-phenylalanine: step 4/6.</text>
</comment>
<comment type="subunit">
    <text evidence="1">Hexamer; dimer of trimers.</text>
</comment>
<comment type="similarity">
    <text evidence="1">Belongs to the homogentisate dioxygenase family.</text>
</comment>
<reference key="1">
    <citation type="submission" date="2006-01" db="EMBL/GenBank/DDBJ databases">
        <title>Complete sequence of Rhodopseudomonas palustris HaA2.</title>
        <authorList>
            <consortium name="US DOE Joint Genome Institute"/>
            <person name="Copeland A."/>
            <person name="Lucas S."/>
            <person name="Lapidus A."/>
            <person name="Barry K."/>
            <person name="Detter J.C."/>
            <person name="Glavina T."/>
            <person name="Hammon N."/>
            <person name="Israni S."/>
            <person name="Pitluck S."/>
            <person name="Chain P."/>
            <person name="Malfatti S."/>
            <person name="Shin M."/>
            <person name="Vergez L."/>
            <person name="Schmutz J."/>
            <person name="Larimer F."/>
            <person name="Land M."/>
            <person name="Hauser L."/>
            <person name="Pelletier D.A."/>
            <person name="Kyrpides N."/>
            <person name="Anderson I."/>
            <person name="Oda Y."/>
            <person name="Harwood C.S."/>
            <person name="Richardson P."/>
        </authorList>
    </citation>
    <scope>NUCLEOTIDE SEQUENCE [LARGE SCALE GENOMIC DNA]</scope>
    <source>
        <strain>HaA2</strain>
    </source>
</reference>
<name>HGD_RHOP2</name>
<evidence type="ECO:0000255" key="1">
    <source>
        <dbReference type="HAMAP-Rule" id="MF_00334"/>
    </source>
</evidence>
<sequence>MNINAAPQIIGHGSQGVTPGYMSGFGNSFETEALPGALPIGRNSPQRAAYGLYAEQLSGSPFTAPRGANERSWLYRIRPSVKHSGRFTKADMGLWRSAPCLEYDMPIAQLRWDAPSMPQEDLTFLQGVRTMTTAGDVNTQAGMATHMYLITQSMVDQHFYNADGELMFVPQQGSLRLVTEFGVISIEPAEIAVIPRGVKFRVELVDGPARGYLCENYGGAFTLPERGPIGANCLANSRDFLTPVAAYEDRDVPTELFVKWGGALWQTTLPHSPIDVVAWHGNYAPYKYDLRTFSPVGAIGFDHPDPSIFTVLTSPSETAGTANIDFVIFPERWMVAENTFRPPWYHMNIMSEFMGLICGVYDAKPQGFVPGGASLHNMMLPHGPDREAFDHASNGELKPVKLTGTMAFMFETRYPQRVTEYAATAGTLQDDYADCWRGLEKRFDPSRP</sequence>
<keyword id="KW-0223">Dioxygenase</keyword>
<keyword id="KW-0408">Iron</keyword>
<keyword id="KW-0479">Metal-binding</keyword>
<keyword id="KW-0560">Oxidoreductase</keyword>
<keyword id="KW-0585">Phenylalanine catabolism</keyword>
<keyword id="KW-1185">Reference proteome</keyword>
<keyword id="KW-0828">Tyrosine catabolism</keyword>
<feature type="chain" id="PRO_1000019540" description="Homogentisate 1,2-dioxygenase">
    <location>
        <begin position="1"/>
        <end position="448"/>
    </location>
</feature>
<feature type="active site" description="Proton acceptor" evidence="1">
    <location>
        <position position="303"/>
    </location>
</feature>
<feature type="binding site" evidence="1">
    <location>
        <position position="346"/>
    </location>
    <ligand>
        <name>Fe cation</name>
        <dbReference type="ChEBI" id="CHEBI:24875"/>
    </ligand>
</feature>
<feature type="binding site" evidence="1">
    <location>
        <position position="352"/>
    </location>
    <ligand>
        <name>Fe cation</name>
        <dbReference type="ChEBI" id="CHEBI:24875"/>
    </ligand>
</feature>
<feature type="binding site" evidence="1">
    <location>
        <position position="361"/>
    </location>
    <ligand>
        <name>homogentisate</name>
        <dbReference type="ChEBI" id="CHEBI:16169"/>
    </ligand>
</feature>
<feature type="binding site" evidence="1">
    <location>
        <position position="382"/>
    </location>
    <ligand>
        <name>Fe cation</name>
        <dbReference type="ChEBI" id="CHEBI:24875"/>
    </ligand>
</feature>
<feature type="binding site" evidence="1">
    <location>
        <position position="382"/>
    </location>
    <ligand>
        <name>homogentisate</name>
        <dbReference type="ChEBI" id="CHEBI:16169"/>
    </ligand>
</feature>
<protein>
    <recommendedName>
        <fullName evidence="1">Homogentisate 1,2-dioxygenase</fullName>
        <shortName evidence="1">HGDO</shortName>
        <ecNumber evidence="1">1.13.11.5</ecNumber>
    </recommendedName>
    <alternativeName>
        <fullName evidence="1">Homogentisate oxygenase</fullName>
    </alternativeName>
    <alternativeName>
        <fullName evidence="1">Homogentisic acid oxidase</fullName>
    </alternativeName>
    <alternativeName>
        <fullName evidence="1">Homogentisicase</fullName>
    </alternativeName>
</protein>
<organism>
    <name type="scientific">Rhodopseudomonas palustris (strain HaA2)</name>
    <dbReference type="NCBI Taxonomy" id="316058"/>
    <lineage>
        <taxon>Bacteria</taxon>
        <taxon>Pseudomonadati</taxon>
        <taxon>Pseudomonadota</taxon>
        <taxon>Alphaproteobacteria</taxon>
        <taxon>Hyphomicrobiales</taxon>
        <taxon>Nitrobacteraceae</taxon>
        <taxon>Rhodopseudomonas</taxon>
    </lineage>
</organism>
<proteinExistence type="inferred from homology"/>
<dbReference type="EC" id="1.13.11.5" evidence="1"/>
<dbReference type="EMBL" id="CP000250">
    <property type="protein sequence ID" value="ABD05618.1"/>
    <property type="molecule type" value="Genomic_DNA"/>
</dbReference>
<dbReference type="RefSeq" id="WP_011439807.1">
    <property type="nucleotide sequence ID" value="NC_007778.1"/>
</dbReference>
<dbReference type="SMR" id="Q2J1P2"/>
<dbReference type="STRING" id="316058.RPB_0907"/>
<dbReference type="KEGG" id="rpb:RPB_0907"/>
<dbReference type="eggNOG" id="COG3508">
    <property type="taxonomic scope" value="Bacteria"/>
</dbReference>
<dbReference type="HOGENOM" id="CLU_027174_0_0_5"/>
<dbReference type="OrthoDB" id="9811253at2"/>
<dbReference type="UniPathway" id="UPA00139">
    <property type="reaction ID" value="UER00339"/>
</dbReference>
<dbReference type="Proteomes" id="UP000008809">
    <property type="component" value="Chromosome"/>
</dbReference>
<dbReference type="GO" id="GO:0005737">
    <property type="term" value="C:cytoplasm"/>
    <property type="evidence" value="ECO:0007669"/>
    <property type="project" value="TreeGrafter"/>
</dbReference>
<dbReference type="GO" id="GO:0004411">
    <property type="term" value="F:homogentisate 1,2-dioxygenase activity"/>
    <property type="evidence" value="ECO:0007669"/>
    <property type="project" value="UniProtKB-UniRule"/>
</dbReference>
<dbReference type="GO" id="GO:0005506">
    <property type="term" value="F:iron ion binding"/>
    <property type="evidence" value="ECO:0007669"/>
    <property type="project" value="UniProtKB-UniRule"/>
</dbReference>
<dbReference type="GO" id="GO:0006559">
    <property type="term" value="P:L-phenylalanine catabolic process"/>
    <property type="evidence" value="ECO:0007669"/>
    <property type="project" value="UniProtKB-UniRule"/>
</dbReference>
<dbReference type="GO" id="GO:0006572">
    <property type="term" value="P:tyrosine catabolic process"/>
    <property type="evidence" value="ECO:0007669"/>
    <property type="project" value="UniProtKB-UniRule"/>
</dbReference>
<dbReference type="CDD" id="cd07000">
    <property type="entry name" value="cupin_HGO_N"/>
    <property type="match status" value="1"/>
</dbReference>
<dbReference type="FunFam" id="2.60.120.10:FF:000053">
    <property type="entry name" value="Homogentisate 1,2-dioxygenase"/>
    <property type="match status" value="1"/>
</dbReference>
<dbReference type="Gene3D" id="2.60.120.10">
    <property type="entry name" value="Jelly Rolls"/>
    <property type="match status" value="1"/>
</dbReference>
<dbReference type="HAMAP" id="MF_00334">
    <property type="entry name" value="Homogentis_dioxygen"/>
    <property type="match status" value="1"/>
</dbReference>
<dbReference type="InterPro" id="IPR046451">
    <property type="entry name" value="HgmA_C"/>
</dbReference>
<dbReference type="InterPro" id="IPR046452">
    <property type="entry name" value="HgmA_N"/>
</dbReference>
<dbReference type="InterPro" id="IPR005708">
    <property type="entry name" value="Homogentis_dOase"/>
</dbReference>
<dbReference type="InterPro" id="IPR022950">
    <property type="entry name" value="Homogentis_dOase_bac"/>
</dbReference>
<dbReference type="InterPro" id="IPR014710">
    <property type="entry name" value="RmlC-like_jellyroll"/>
</dbReference>
<dbReference type="InterPro" id="IPR011051">
    <property type="entry name" value="RmlC_Cupin_sf"/>
</dbReference>
<dbReference type="NCBIfam" id="TIGR01015">
    <property type="entry name" value="hmgA"/>
    <property type="match status" value="1"/>
</dbReference>
<dbReference type="PANTHER" id="PTHR11056">
    <property type="entry name" value="HOMOGENTISATE 1,2-DIOXYGENASE"/>
    <property type="match status" value="1"/>
</dbReference>
<dbReference type="PANTHER" id="PTHR11056:SF0">
    <property type="entry name" value="HOMOGENTISATE 1,2-DIOXYGENASE"/>
    <property type="match status" value="1"/>
</dbReference>
<dbReference type="Pfam" id="PF04209">
    <property type="entry name" value="HgmA_C"/>
    <property type="match status" value="1"/>
</dbReference>
<dbReference type="Pfam" id="PF20510">
    <property type="entry name" value="HgmA_N"/>
    <property type="match status" value="1"/>
</dbReference>
<dbReference type="SUPFAM" id="SSF51182">
    <property type="entry name" value="RmlC-like cupins"/>
    <property type="match status" value="1"/>
</dbReference>